<sequence length="460" mass="53210">MAGGGGGGGGEGPRQLDQTPTWAVSTVCGVIILISIILELIIHKVGEVFERKKKKALFEALEKIKNELMVLGFISLLLTFGQNYIASICVPSRYGHAMSFCGPYDGPSEDDRKKLKKTDHAMRILYSVQRRSLADAPPVNCKKDYVALISLNALHQVHIFIFFLAVFHVIYSAITMMLGRAKIRGWKVWEQEVIHEQEMMNDPSRFRLTHETSFVREHVNSWASNKFFFYVMCFFRQILRSVRKSDYLTMRHGFISVHLAPGMKFDFQKYIKRSLEDDFKVVVGIRPELWAFVMLFLLFDVHGWYVTAVITMIPPLLTLAIGTKLQAIISYMALEIQERHAVIQGMPVVNVSDQHFWFEKPDLVLHMIHFVLFQNAFEITYFFWIWYEFGLRSCFHHHFGLIIIRVCLGVGVQFLCSYITLPLYALVTQMGSTMKRSVFDEQTSKALEQWHKKARKKNEK</sequence>
<name>MLO9_ARATH</name>
<feature type="chain" id="PRO_0000209939" description="MLO-like protein 9">
    <location>
        <begin position="1"/>
        <end position="460"/>
    </location>
</feature>
<feature type="topological domain" description="Extracellular" evidence="2">
    <location>
        <begin position="1"/>
        <end position="21"/>
    </location>
</feature>
<feature type="transmembrane region" description="Helical; Name=1" evidence="2">
    <location>
        <begin position="22"/>
        <end position="42"/>
    </location>
</feature>
<feature type="topological domain" description="Cytoplasmic" evidence="2">
    <location>
        <begin position="43"/>
        <end position="67"/>
    </location>
</feature>
<feature type="transmembrane region" description="Helical; Name=2" evidence="2">
    <location>
        <begin position="68"/>
        <end position="88"/>
    </location>
</feature>
<feature type="topological domain" description="Extracellular" evidence="2">
    <location>
        <begin position="89"/>
        <end position="158"/>
    </location>
</feature>
<feature type="transmembrane region" description="Helical; Name=3" evidence="2">
    <location>
        <begin position="159"/>
        <end position="179"/>
    </location>
</feature>
<feature type="topological domain" description="Cytoplasmic" evidence="2">
    <location>
        <begin position="180"/>
        <end position="289"/>
    </location>
</feature>
<feature type="transmembrane region" description="Helical; Name=4" evidence="2">
    <location>
        <begin position="290"/>
        <end position="310"/>
    </location>
</feature>
<feature type="topological domain" description="Extracellular" evidence="2">
    <location>
        <begin position="311"/>
        <end position="315"/>
    </location>
</feature>
<feature type="transmembrane region" description="Helical; Name=5" evidence="2">
    <location>
        <begin position="316"/>
        <end position="336"/>
    </location>
</feature>
<feature type="topological domain" description="Cytoplasmic" evidence="2">
    <location>
        <begin position="337"/>
        <end position="366"/>
    </location>
</feature>
<feature type="transmembrane region" description="Helical; Name=6" evidence="2">
    <location>
        <begin position="367"/>
        <end position="387"/>
    </location>
</feature>
<feature type="topological domain" description="Extracellular" evidence="2">
    <location>
        <begin position="388"/>
        <end position="398"/>
    </location>
</feature>
<feature type="transmembrane region" description="Helical; Name=7" evidence="2">
    <location>
        <begin position="399"/>
        <end position="419"/>
    </location>
</feature>
<feature type="topological domain" description="Cytoplasmic" evidence="2">
    <location>
        <begin position="420"/>
        <end position="460"/>
    </location>
</feature>
<feature type="region of interest" description="Calmodulin-binding">
    <location>
        <begin position="441"/>
        <end position="460"/>
    </location>
</feature>
<organism>
    <name type="scientific">Arabidopsis thaliana</name>
    <name type="common">Mouse-ear cress</name>
    <dbReference type="NCBI Taxonomy" id="3702"/>
    <lineage>
        <taxon>Eukaryota</taxon>
        <taxon>Viridiplantae</taxon>
        <taxon>Streptophyta</taxon>
        <taxon>Embryophyta</taxon>
        <taxon>Tracheophyta</taxon>
        <taxon>Spermatophyta</taxon>
        <taxon>Magnoliopsida</taxon>
        <taxon>eudicotyledons</taxon>
        <taxon>Gunneridae</taxon>
        <taxon>Pentapetalae</taxon>
        <taxon>rosids</taxon>
        <taxon>malvids</taxon>
        <taxon>Brassicales</taxon>
        <taxon>Brassicaceae</taxon>
        <taxon>Camelineae</taxon>
        <taxon>Arabidopsis</taxon>
    </lineage>
</organism>
<protein>
    <recommendedName>
        <fullName>MLO-like protein 9</fullName>
        <shortName>AtMlo9</shortName>
    </recommendedName>
</protein>
<dbReference type="EMBL" id="AC025815">
    <property type="protein sequence ID" value="AAG51314.1"/>
    <property type="status" value="ALT_SEQ"/>
    <property type="molecule type" value="Genomic_DNA"/>
</dbReference>
<dbReference type="EMBL" id="AC035249">
    <property type="protein sequence ID" value="AAG51234.1"/>
    <property type="status" value="ALT_SEQ"/>
    <property type="molecule type" value="Genomic_DNA"/>
</dbReference>
<dbReference type="EMBL" id="CP002684">
    <property type="protein sequence ID" value="AEE31927.1"/>
    <property type="molecule type" value="Genomic_DNA"/>
</dbReference>
<dbReference type="EMBL" id="AF369570">
    <property type="protein sequence ID" value="AAK53802.1"/>
    <property type="molecule type" value="mRNA"/>
</dbReference>
<dbReference type="PIR" id="E96495">
    <property type="entry name" value="E96495"/>
</dbReference>
<dbReference type="RefSeq" id="NP_174980.3">
    <property type="nucleotide sequence ID" value="NM_103440.4"/>
</dbReference>
<dbReference type="BioGRID" id="26089">
    <property type="interactions" value="10"/>
</dbReference>
<dbReference type="IntAct" id="Q94KB4">
    <property type="interactions" value="7"/>
</dbReference>
<dbReference type="STRING" id="3702.Q94KB4"/>
<dbReference type="iPTMnet" id="Q94KB4"/>
<dbReference type="PaxDb" id="3702-AT1G42560.1"/>
<dbReference type="ProteomicsDB" id="238360"/>
<dbReference type="EnsemblPlants" id="AT1G42560.1">
    <property type="protein sequence ID" value="AT1G42560.1"/>
    <property type="gene ID" value="AT1G42560"/>
</dbReference>
<dbReference type="GeneID" id="840861"/>
<dbReference type="Gramene" id="AT1G42560.1">
    <property type="protein sequence ID" value="AT1G42560.1"/>
    <property type="gene ID" value="AT1G42560"/>
</dbReference>
<dbReference type="KEGG" id="ath:AT1G42560"/>
<dbReference type="Araport" id="AT1G42560"/>
<dbReference type="TAIR" id="AT1G42560">
    <property type="gene designation" value="MLO9"/>
</dbReference>
<dbReference type="eggNOG" id="ENOG502QPZ5">
    <property type="taxonomic scope" value="Eukaryota"/>
</dbReference>
<dbReference type="HOGENOM" id="CLU_024720_3_0_1"/>
<dbReference type="InParanoid" id="Q94KB4"/>
<dbReference type="OMA" id="ANMNIKC"/>
<dbReference type="PhylomeDB" id="Q94KB4"/>
<dbReference type="PRO" id="PR:Q94KB4"/>
<dbReference type="Proteomes" id="UP000006548">
    <property type="component" value="Chromosome 1"/>
</dbReference>
<dbReference type="ExpressionAtlas" id="Q94KB4">
    <property type="expression patterns" value="baseline and differential"/>
</dbReference>
<dbReference type="GO" id="GO:0005886">
    <property type="term" value="C:plasma membrane"/>
    <property type="evidence" value="ECO:0000314"/>
    <property type="project" value="TAIR"/>
</dbReference>
<dbReference type="GO" id="GO:0005516">
    <property type="term" value="F:calmodulin binding"/>
    <property type="evidence" value="ECO:0007669"/>
    <property type="project" value="UniProtKB-KW"/>
</dbReference>
<dbReference type="GO" id="GO:0006952">
    <property type="term" value="P:defense response"/>
    <property type="evidence" value="ECO:0007669"/>
    <property type="project" value="UniProtKB-KW"/>
</dbReference>
<dbReference type="GO" id="GO:0010183">
    <property type="term" value="P:pollen tube guidance"/>
    <property type="evidence" value="ECO:0000316"/>
    <property type="project" value="TAIR"/>
</dbReference>
<dbReference type="GO" id="GO:0072659">
    <property type="term" value="P:protein localization to plasma membrane"/>
    <property type="evidence" value="ECO:0000316"/>
    <property type="project" value="TAIR"/>
</dbReference>
<dbReference type="InterPro" id="IPR004326">
    <property type="entry name" value="Mlo"/>
</dbReference>
<dbReference type="PANTHER" id="PTHR31942">
    <property type="entry name" value="MLO-LIKE PROTEIN 1"/>
    <property type="match status" value="1"/>
</dbReference>
<dbReference type="PANTHER" id="PTHR31942:SF53">
    <property type="entry name" value="MLO-LIKE PROTEIN 5-RELATED"/>
    <property type="match status" value="1"/>
</dbReference>
<dbReference type="Pfam" id="PF03094">
    <property type="entry name" value="Mlo"/>
    <property type="match status" value="1"/>
</dbReference>
<accession>Q94KB4</accession>
<accession>Q9C855</accession>
<accession>Q9C8E5</accession>
<proteinExistence type="evidence at transcript level"/>
<keyword id="KW-0112">Calmodulin-binding</keyword>
<keyword id="KW-0472">Membrane</keyword>
<keyword id="KW-0568">Pathogenesis-related protein</keyword>
<keyword id="KW-0611">Plant defense</keyword>
<keyword id="KW-1185">Reference proteome</keyword>
<keyword id="KW-0812">Transmembrane</keyword>
<keyword id="KW-1133">Transmembrane helix</keyword>
<gene>
    <name type="primary">MLO9</name>
    <name type="ordered locus">At1g42560</name>
    <name type="ORF">F8D11.2</name>
    <name type="ORF">T8D8.5</name>
</gene>
<comment type="function">
    <text evidence="1">May be involved in modulation of pathogen defense and leaf cell death. Activity seems to be regulated by Ca(2+)-dependent calmodulin binding and seems not to require heterotrimeric G proteins (By similarity).</text>
</comment>
<comment type="subcellular location">
    <subcellularLocation>
        <location evidence="1">Membrane</location>
        <topology evidence="1">Multi-pass membrane protein</topology>
    </subcellularLocation>
</comment>
<comment type="domain">
    <text evidence="1">The C-terminus contains a calmodulin-binding domain, which binds calmodulin in a calcium-dependent fashion.</text>
</comment>
<comment type="similarity">
    <text evidence="3">Belongs to the MLO family.</text>
</comment>
<comment type="sequence caution" evidence="3">
    <conflict type="erroneous gene model prediction">
        <sequence resource="EMBL-CDS" id="AAG51234"/>
    </conflict>
</comment>
<comment type="sequence caution" evidence="3">
    <conflict type="erroneous gene model prediction">
        <sequence resource="EMBL-CDS" id="AAG51314"/>
    </conflict>
</comment>
<evidence type="ECO:0000250" key="1"/>
<evidence type="ECO:0000255" key="2"/>
<evidence type="ECO:0000305" key="3"/>
<reference key="1">
    <citation type="journal article" date="2000" name="Nature">
        <title>Sequence and analysis of chromosome 1 of the plant Arabidopsis thaliana.</title>
        <authorList>
            <person name="Theologis A."/>
            <person name="Ecker J.R."/>
            <person name="Palm C.J."/>
            <person name="Federspiel N.A."/>
            <person name="Kaul S."/>
            <person name="White O."/>
            <person name="Alonso J."/>
            <person name="Altafi H."/>
            <person name="Araujo R."/>
            <person name="Bowman C.L."/>
            <person name="Brooks S.Y."/>
            <person name="Buehler E."/>
            <person name="Chan A."/>
            <person name="Chao Q."/>
            <person name="Chen H."/>
            <person name="Cheuk R.F."/>
            <person name="Chin C.W."/>
            <person name="Chung M.K."/>
            <person name="Conn L."/>
            <person name="Conway A.B."/>
            <person name="Conway A.R."/>
            <person name="Creasy T.H."/>
            <person name="Dewar K."/>
            <person name="Dunn P."/>
            <person name="Etgu P."/>
            <person name="Feldblyum T.V."/>
            <person name="Feng J.-D."/>
            <person name="Fong B."/>
            <person name="Fujii C.Y."/>
            <person name="Gill J.E."/>
            <person name="Goldsmith A.D."/>
            <person name="Haas B."/>
            <person name="Hansen N.F."/>
            <person name="Hughes B."/>
            <person name="Huizar L."/>
            <person name="Hunter J.L."/>
            <person name="Jenkins J."/>
            <person name="Johnson-Hopson C."/>
            <person name="Khan S."/>
            <person name="Khaykin E."/>
            <person name="Kim C.J."/>
            <person name="Koo H.L."/>
            <person name="Kremenetskaia I."/>
            <person name="Kurtz D.B."/>
            <person name="Kwan A."/>
            <person name="Lam B."/>
            <person name="Langin-Hooper S."/>
            <person name="Lee A."/>
            <person name="Lee J.M."/>
            <person name="Lenz C.A."/>
            <person name="Li J.H."/>
            <person name="Li Y.-P."/>
            <person name="Lin X."/>
            <person name="Liu S.X."/>
            <person name="Liu Z.A."/>
            <person name="Luros J.S."/>
            <person name="Maiti R."/>
            <person name="Marziali A."/>
            <person name="Militscher J."/>
            <person name="Miranda M."/>
            <person name="Nguyen M."/>
            <person name="Nierman W.C."/>
            <person name="Osborne B.I."/>
            <person name="Pai G."/>
            <person name="Peterson J."/>
            <person name="Pham P.K."/>
            <person name="Rizzo M."/>
            <person name="Rooney T."/>
            <person name="Rowley D."/>
            <person name="Sakano H."/>
            <person name="Salzberg S.L."/>
            <person name="Schwartz J.R."/>
            <person name="Shinn P."/>
            <person name="Southwick A.M."/>
            <person name="Sun H."/>
            <person name="Tallon L.J."/>
            <person name="Tambunga G."/>
            <person name="Toriumi M.J."/>
            <person name="Town C.D."/>
            <person name="Utterback T."/>
            <person name="Van Aken S."/>
            <person name="Vaysberg M."/>
            <person name="Vysotskaia V.S."/>
            <person name="Walker M."/>
            <person name="Wu D."/>
            <person name="Yu G."/>
            <person name="Fraser C.M."/>
            <person name="Venter J.C."/>
            <person name="Davis R.W."/>
        </authorList>
    </citation>
    <scope>NUCLEOTIDE SEQUENCE [LARGE SCALE GENOMIC DNA]</scope>
    <source>
        <strain>cv. Columbia</strain>
    </source>
</reference>
<reference key="2">
    <citation type="journal article" date="2017" name="Plant J.">
        <title>Araport11: a complete reannotation of the Arabidopsis thaliana reference genome.</title>
        <authorList>
            <person name="Cheng C.Y."/>
            <person name="Krishnakumar V."/>
            <person name="Chan A.P."/>
            <person name="Thibaud-Nissen F."/>
            <person name="Schobel S."/>
            <person name="Town C.D."/>
        </authorList>
    </citation>
    <scope>GENOME REANNOTATION</scope>
    <source>
        <strain>cv. Columbia</strain>
    </source>
</reference>
<reference key="3">
    <citation type="journal article" date="2003" name="J. Mol. Evol.">
        <title>Molecular phylogeny and evolution of the plant-specific seven-transmembrane MLO family.</title>
        <authorList>
            <person name="Devoto A."/>
            <person name="Hartmann H.A."/>
            <person name="Piffanelli P."/>
            <person name="Elliott C."/>
            <person name="Simmons C."/>
            <person name="Taramino G."/>
            <person name="Goh C.-S."/>
            <person name="Cohen F.E."/>
            <person name="Emerson B.C."/>
            <person name="Schulze-Lefert P."/>
            <person name="Panstruga R."/>
        </authorList>
    </citation>
    <scope>NUCLEOTIDE SEQUENCE OF 122-460</scope>
</reference>